<proteinExistence type="inferred from homology"/>
<protein>
    <recommendedName>
        <fullName evidence="1">Aspartate carbamoyltransferase catalytic subunit</fullName>
        <ecNumber evidence="1">2.1.3.2</ecNumber>
    </recommendedName>
    <alternativeName>
        <fullName evidence="1">Aspartate transcarbamylase</fullName>
        <shortName evidence="1">ATCase</shortName>
    </alternativeName>
</protein>
<dbReference type="EC" id="2.1.3.2" evidence="1"/>
<dbReference type="EMBL" id="CP000115">
    <property type="protein sequence ID" value="ABA05266.1"/>
    <property type="status" value="ALT_INIT"/>
    <property type="molecule type" value="Genomic_DNA"/>
</dbReference>
<dbReference type="RefSeq" id="WP_041344999.1">
    <property type="nucleotide sequence ID" value="NC_007406.1"/>
</dbReference>
<dbReference type="SMR" id="Q3SR25"/>
<dbReference type="STRING" id="323098.Nwi_2007"/>
<dbReference type="KEGG" id="nwi:Nwi_2007"/>
<dbReference type="eggNOG" id="COG0540">
    <property type="taxonomic scope" value="Bacteria"/>
</dbReference>
<dbReference type="HOGENOM" id="CLU_043846_2_0_5"/>
<dbReference type="OrthoDB" id="9774690at2"/>
<dbReference type="UniPathway" id="UPA00070">
    <property type="reaction ID" value="UER00116"/>
</dbReference>
<dbReference type="Proteomes" id="UP000002531">
    <property type="component" value="Chromosome"/>
</dbReference>
<dbReference type="GO" id="GO:0005829">
    <property type="term" value="C:cytosol"/>
    <property type="evidence" value="ECO:0007669"/>
    <property type="project" value="TreeGrafter"/>
</dbReference>
<dbReference type="GO" id="GO:0016597">
    <property type="term" value="F:amino acid binding"/>
    <property type="evidence" value="ECO:0007669"/>
    <property type="project" value="InterPro"/>
</dbReference>
<dbReference type="GO" id="GO:0004070">
    <property type="term" value="F:aspartate carbamoyltransferase activity"/>
    <property type="evidence" value="ECO:0007669"/>
    <property type="project" value="UniProtKB-UniRule"/>
</dbReference>
<dbReference type="GO" id="GO:0006207">
    <property type="term" value="P:'de novo' pyrimidine nucleobase biosynthetic process"/>
    <property type="evidence" value="ECO:0007669"/>
    <property type="project" value="InterPro"/>
</dbReference>
<dbReference type="GO" id="GO:0044205">
    <property type="term" value="P:'de novo' UMP biosynthetic process"/>
    <property type="evidence" value="ECO:0007669"/>
    <property type="project" value="UniProtKB-UniRule"/>
</dbReference>
<dbReference type="GO" id="GO:0006520">
    <property type="term" value="P:amino acid metabolic process"/>
    <property type="evidence" value="ECO:0007669"/>
    <property type="project" value="InterPro"/>
</dbReference>
<dbReference type="FunFam" id="3.40.50.1370:FF:000007">
    <property type="entry name" value="Aspartate carbamoyltransferase"/>
    <property type="match status" value="1"/>
</dbReference>
<dbReference type="Gene3D" id="3.40.50.1370">
    <property type="entry name" value="Aspartate/ornithine carbamoyltransferase"/>
    <property type="match status" value="2"/>
</dbReference>
<dbReference type="HAMAP" id="MF_00001">
    <property type="entry name" value="Asp_carb_tr"/>
    <property type="match status" value="1"/>
</dbReference>
<dbReference type="InterPro" id="IPR006132">
    <property type="entry name" value="Asp/Orn_carbamoyltranf_P-bd"/>
</dbReference>
<dbReference type="InterPro" id="IPR006130">
    <property type="entry name" value="Asp/Orn_carbamoylTrfase"/>
</dbReference>
<dbReference type="InterPro" id="IPR036901">
    <property type="entry name" value="Asp/Orn_carbamoylTrfase_sf"/>
</dbReference>
<dbReference type="InterPro" id="IPR002082">
    <property type="entry name" value="Asp_carbamoyltransf"/>
</dbReference>
<dbReference type="InterPro" id="IPR006131">
    <property type="entry name" value="Asp_carbamoyltransf_Asp/Orn-bd"/>
</dbReference>
<dbReference type="NCBIfam" id="TIGR00670">
    <property type="entry name" value="asp_carb_tr"/>
    <property type="match status" value="1"/>
</dbReference>
<dbReference type="NCBIfam" id="NF002032">
    <property type="entry name" value="PRK00856.1"/>
    <property type="match status" value="1"/>
</dbReference>
<dbReference type="PANTHER" id="PTHR45753:SF6">
    <property type="entry name" value="ASPARTATE CARBAMOYLTRANSFERASE"/>
    <property type="match status" value="1"/>
</dbReference>
<dbReference type="PANTHER" id="PTHR45753">
    <property type="entry name" value="ORNITHINE CARBAMOYLTRANSFERASE, MITOCHONDRIAL"/>
    <property type="match status" value="1"/>
</dbReference>
<dbReference type="Pfam" id="PF00185">
    <property type="entry name" value="OTCace"/>
    <property type="match status" value="1"/>
</dbReference>
<dbReference type="Pfam" id="PF02729">
    <property type="entry name" value="OTCace_N"/>
    <property type="match status" value="1"/>
</dbReference>
<dbReference type="PRINTS" id="PR00100">
    <property type="entry name" value="AOTCASE"/>
</dbReference>
<dbReference type="PRINTS" id="PR00101">
    <property type="entry name" value="ATCASE"/>
</dbReference>
<dbReference type="SUPFAM" id="SSF53671">
    <property type="entry name" value="Aspartate/ornithine carbamoyltransferase"/>
    <property type="match status" value="1"/>
</dbReference>
<dbReference type="PROSITE" id="PS00097">
    <property type="entry name" value="CARBAMOYLTRANSFERASE"/>
    <property type="match status" value="1"/>
</dbReference>
<name>PYRB_NITWN</name>
<sequence>MTSSAKSSFVLGHRHLLGIEGLSVADITGLLDLSEEYVELNRQVDKKRTSLRGLTQVNLFFEASTRTQSSFEIAGKRLGADVMNMSVSSLSTRKGETLVDTAMTLNAMHPDILVMRHSASGAVELLARKVDGSVVNAGDGAHEHPTQALLDALTIRRNKGRLDGLLVAICGDVLHSRVARSNIILLNAMGARVRVVAPSTLLPPGIERMGVEVARDMREGLDGADIVMMLRLQRERMSGSFVPSSSEYFHYFGLDQKKLAYAKPNALVMHPGPMNRGVEIDSIVADGTQSLIREQVEMGVAVRMAVLEALARNLPNA</sequence>
<comment type="function">
    <text evidence="1">Catalyzes the condensation of carbamoyl phosphate and aspartate to form carbamoyl aspartate and inorganic phosphate, the committed step in the de novo pyrimidine nucleotide biosynthesis pathway.</text>
</comment>
<comment type="catalytic activity">
    <reaction evidence="1">
        <text>carbamoyl phosphate + L-aspartate = N-carbamoyl-L-aspartate + phosphate + H(+)</text>
        <dbReference type="Rhea" id="RHEA:20013"/>
        <dbReference type="ChEBI" id="CHEBI:15378"/>
        <dbReference type="ChEBI" id="CHEBI:29991"/>
        <dbReference type="ChEBI" id="CHEBI:32814"/>
        <dbReference type="ChEBI" id="CHEBI:43474"/>
        <dbReference type="ChEBI" id="CHEBI:58228"/>
        <dbReference type="EC" id="2.1.3.2"/>
    </reaction>
</comment>
<comment type="pathway">
    <text evidence="1">Pyrimidine metabolism; UMP biosynthesis via de novo pathway; (S)-dihydroorotate from bicarbonate: step 2/3.</text>
</comment>
<comment type="subunit">
    <text evidence="1">Heterododecamer (2C3:3R2) of six catalytic PyrB chains organized as two trimers (C3), and six regulatory PyrI chains organized as three dimers (R2).</text>
</comment>
<comment type="similarity">
    <text evidence="1">Belongs to the aspartate/ornithine carbamoyltransferase superfamily. ATCase family.</text>
</comment>
<comment type="sequence caution" evidence="2">
    <conflict type="erroneous initiation">
        <sequence resource="EMBL-CDS" id="ABA05266"/>
    </conflict>
</comment>
<organism>
    <name type="scientific">Nitrobacter winogradskyi (strain ATCC 25391 / DSM 10237 / CIP 104748 / NCIMB 11846 / Nb-255)</name>
    <dbReference type="NCBI Taxonomy" id="323098"/>
    <lineage>
        <taxon>Bacteria</taxon>
        <taxon>Pseudomonadati</taxon>
        <taxon>Pseudomonadota</taxon>
        <taxon>Alphaproteobacteria</taxon>
        <taxon>Hyphomicrobiales</taxon>
        <taxon>Nitrobacteraceae</taxon>
        <taxon>Nitrobacter</taxon>
    </lineage>
</organism>
<reference key="1">
    <citation type="journal article" date="2006" name="Appl. Environ. Microbiol.">
        <title>Genome sequence of the chemolithoautotrophic nitrite-oxidizing bacterium Nitrobacter winogradskyi Nb-255.</title>
        <authorList>
            <person name="Starkenburg S.R."/>
            <person name="Chain P.S.G."/>
            <person name="Sayavedra-Soto L.A."/>
            <person name="Hauser L."/>
            <person name="Land M.L."/>
            <person name="Larimer F.W."/>
            <person name="Malfatti S.A."/>
            <person name="Klotz M.G."/>
            <person name="Bottomley P.J."/>
            <person name="Arp D.J."/>
            <person name="Hickey W.J."/>
        </authorList>
    </citation>
    <scope>NUCLEOTIDE SEQUENCE [LARGE SCALE GENOMIC DNA]</scope>
    <source>
        <strain>ATCC 25391 / DSM 10237 / CIP 104748 / NCIMB 11846 / Nb-255</strain>
    </source>
</reference>
<accession>Q3SR25</accession>
<evidence type="ECO:0000255" key="1">
    <source>
        <dbReference type="HAMAP-Rule" id="MF_00001"/>
    </source>
</evidence>
<evidence type="ECO:0000305" key="2"/>
<gene>
    <name evidence="1" type="primary">pyrB</name>
    <name type="ordered locus">Nwi_2007</name>
</gene>
<feature type="chain" id="PRO_0000329109" description="Aspartate carbamoyltransferase catalytic subunit">
    <location>
        <begin position="1"/>
        <end position="317"/>
    </location>
</feature>
<feature type="binding site" evidence="1">
    <location>
        <position position="66"/>
    </location>
    <ligand>
        <name>carbamoyl phosphate</name>
        <dbReference type="ChEBI" id="CHEBI:58228"/>
    </ligand>
</feature>
<feature type="binding site" evidence="1">
    <location>
        <position position="67"/>
    </location>
    <ligand>
        <name>carbamoyl phosphate</name>
        <dbReference type="ChEBI" id="CHEBI:58228"/>
    </ligand>
</feature>
<feature type="binding site" evidence="1">
    <location>
        <position position="94"/>
    </location>
    <ligand>
        <name>L-aspartate</name>
        <dbReference type="ChEBI" id="CHEBI:29991"/>
    </ligand>
</feature>
<feature type="binding site" evidence="1">
    <location>
        <position position="116"/>
    </location>
    <ligand>
        <name>carbamoyl phosphate</name>
        <dbReference type="ChEBI" id="CHEBI:58228"/>
    </ligand>
</feature>
<feature type="binding site" evidence="1">
    <location>
        <position position="144"/>
    </location>
    <ligand>
        <name>carbamoyl phosphate</name>
        <dbReference type="ChEBI" id="CHEBI:58228"/>
    </ligand>
</feature>
<feature type="binding site" evidence="1">
    <location>
        <position position="147"/>
    </location>
    <ligand>
        <name>carbamoyl phosphate</name>
        <dbReference type="ChEBI" id="CHEBI:58228"/>
    </ligand>
</feature>
<feature type="binding site" evidence="1">
    <location>
        <position position="177"/>
    </location>
    <ligand>
        <name>L-aspartate</name>
        <dbReference type="ChEBI" id="CHEBI:29991"/>
    </ligand>
</feature>
<feature type="binding site" evidence="1">
    <location>
        <position position="231"/>
    </location>
    <ligand>
        <name>L-aspartate</name>
        <dbReference type="ChEBI" id="CHEBI:29991"/>
    </ligand>
</feature>
<feature type="binding site" evidence="1">
    <location>
        <position position="272"/>
    </location>
    <ligand>
        <name>carbamoyl phosphate</name>
        <dbReference type="ChEBI" id="CHEBI:58228"/>
    </ligand>
</feature>
<feature type="binding site" evidence="1">
    <location>
        <position position="273"/>
    </location>
    <ligand>
        <name>carbamoyl phosphate</name>
        <dbReference type="ChEBI" id="CHEBI:58228"/>
    </ligand>
</feature>
<keyword id="KW-0665">Pyrimidine biosynthesis</keyword>
<keyword id="KW-1185">Reference proteome</keyword>
<keyword id="KW-0808">Transferase</keyword>